<accession>C1DHH2</accession>
<evidence type="ECO:0000255" key="1">
    <source>
        <dbReference type="HAMAP-Rule" id="MF_01681"/>
    </source>
</evidence>
<proteinExistence type="inferred from homology"/>
<protein>
    <recommendedName>
        <fullName evidence="1">Enolase-phosphatase E1</fullName>
        <ecNumber evidence="1">3.1.3.77</ecNumber>
    </recommendedName>
    <alternativeName>
        <fullName evidence="1">2,3-diketo-5-methylthio-1-phosphopentane phosphatase</fullName>
    </alternativeName>
</protein>
<keyword id="KW-0028">Amino-acid biosynthesis</keyword>
<keyword id="KW-0378">Hydrolase</keyword>
<keyword id="KW-0460">Magnesium</keyword>
<keyword id="KW-0479">Metal-binding</keyword>
<keyword id="KW-0486">Methionine biosynthesis</keyword>
<gene>
    <name evidence="1" type="primary">mtnC</name>
    <name type="ordered locus">Avin_23800</name>
</gene>
<reference key="1">
    <citation type="journal article" date="2009" name="J. Bacteriol.">
        <title>Genome sequence of Azotobacter vinelandii, an obligate aerobe specialized to support diverse anaerobic metabolic processes.</title>
        <authorList>
            <person name="Setubal J.C."/>
            <person name="Dos Santos P."/>
            <person name="Goldman B.S."/>
            <person name="Ertesvaag H."/>
            <person name="Espin G."/>
            <person name="Rubio L.M."/>
            <person name="Valla S."/>
            <person name="Almeida N.F."/>
            <person name="Balasubramanian D."/>
            <person name="Cromes L."/>
            <person name="Curatti L."/>
            <person name="Du Z."/>
            <person name="Godsy E."/>
            <person name="Goodner B."/>
            <person name="Hellner-Burris K."/>
            <person name="Hernandez J.A."/>
            <person name="Houmiel K."/>
            <person name="Imperial J."/>
            <person name="Kennedy C."/>
            <person name="Larson T.J."/>
            <person name="Latreille P."/>
            <person name="Ligon L.S."/>
            <person name="Lu J."/>
            <person name="Maerk M."/>
            <person name="Miller N.M."/>
            <person name="Norton S."/>
            <person name="O'Carroll I.P."/>
            <person name="Paulsen I."/>
            <person name="Raulfs E.C."/>
            <person name="Roemer R."/>
            <person name="Rosser J."/>
            <person name="Segura D."/>
            <person name="Slater S."/>
            <person name="Stricklin S.L."/>
            <person name="Studholme D.J."/>
            <person name="Sun J."/>
            <person name="Viana C.J."/>
            <person name="Wallin E."/>
            <person name="Wang B."/>
            <person name="Wheeler C."/>
            <person name="Zhu H."/>
            <person name="Dean D.R."/>
            <person name="Dixon R."/>
            <person name="Wood D."/>
        </authorList>
    </citation>
    <scope>NUCLEOTIDE SEQUENCE [LARGE SCALE GENOMIC DNA]</scope>
    <source>
        <strain>DJ / ATCC BAA-1303</strain>
    </source>
</reference>
<organism>
    <name type="scientific">Azotobacter vinelandii (strain DJ / ATCC BAA-1303)</name>
    <dbReference type="NCBI Taxonomy" id="322710"/>
    <lineage>
        <taxon>Bacteria</taxon>
        <taxon>Pseudomonadati</taxon>
        <taxon>Pseudomonadota</taxon>
        <taxon>Gammaproteobacteria</taxon>
        <taxon>Pseudomonadales</taxon>
        <taxon>Pseudomonadaceae</taxon>
        <taxon>Azotobacter</taxon>
    </lineage>
</organism>
<comment type="function">
    <text evidence="1">Bifunctional enzyme that catalyzes the enolization of 2,3-diketo-5-methylthiopentyl-1-phosphate (DK-MTP-1-P) into the intermediate 2-hydroxy-3-keto-5-methylthiopentenyl-1-phosphate (HK-MTPenyl-1-P), which is then dephosphorylated to form the acireductone 1,2-dihydroxy-3-keto-5-methylthiopentene (DHK-MTPene).</text>
</comment>
<comment type="catalytic activity">
    <reaction evidence="1">
        <text>5-methylsulfanyl-2,3-dioxopentyl phosphate + H2O = 1,2-dihydroxy-5-(methylsulfanyl)pent-1-en-3-one + phosphate</text>
        <dbReference type="Rhea" id="RHEA:21700"/>
        <dbReference type="ChEBI" id="CHEBI:15377"/>
        <dbReference type="ChEBI" id="CHEBI:43474"/>
        <dbReference type="ChEBI" id="CHEBI:49252"/>
        <dbReference type="ChEBI" id="CHEBI:58828"/>
        <dbReference type="EC" id="3.1.3.77"/>
    </reaction>
</comment>
<comment type="cofactor">
    <cofactor evidence="1">
        <name>Mg(2+)</name>
        <dbReference type="ChEBI" id="CHEBI:18420"/>
    </cofactor>
    <text evidence="1">Binds 1 Mg(2+) ion per subunit.</text>
</comment>
<comment type="pathway">
    <text evidence="1">Amino-acid biosynthesis; L-methionine biosynthesis via salvage pathway; L-methionine from S-methyl-5-thio-alpha-D-ribose 1-phosphate: step 3/6.</text>
</comment>
<comment type="pathway">
    <text evidence="1">Amino-acid biosynthesis; L-methionine biosynthesis via salvage pathway; L-methionine from S-methyl-5-thio-alpha-D-ribose 1-phosphate: step 4/6.</text>
</comment>
<comment type="subunit">
    <text evidence="1">Monomer.</text>
</comment>
<comment type="similarity">
    <text evidence="1">Belongs to the HAD-like hydrolase superfamily. MasA/MtnC family.</text>
</comment>
<sequence length="227" mass="24640">MPVRAILTDIEGTTSAVSFVFDVLFPYAREHLPAFVRRHAAEAEVATQLEAVRAESGEADADIERVIEILLGWIAEDRKATPLKALQGMVWEQGYRASALKGHVYPDAVATMRRWKHEGYQLYVYSSGSIQAQRLIFGCSEAGDLSPLFSGYFDTTSGPKREAASYVRIAEAIGRPPAEILFLSDVLQELDAARAAGMCTCGLAREGGELDGHPTVSSFTAIEPAAC</sequence>
<name>MTNC_AZOVD</name>
<feature type="chain" id="PRO_1000215904" description="Enolase-phosphatase E1">
    <location>
        <begin position="1"/>
        <end position="227"/>
    </location>
</feature>
<dbReference type="EC" id="3.1.3.77" evidence="1"/>
<dbReference type="EMBL" id="CP001157">
    <property type="protein sequence ID" value="ACO78567.1"/>
    <property type="molecule type" value="Genomic_DNA"/>
</dbReference>
<dbReference type="RefSeq" id="WP_012700965.1">
    <property type="nucleotide sequence ID" value="NC_012560.1"/>
</dbReference>
<dbReference type="SMR" id="C1DHH2"/>
<dbReference type="STRING" id="322710.Avin_23800"/>
<dbReference type="EnsemblBacteria" id="ACO78567">
    <property type="protein sequence ID" value="ACO78567"/>
    <property type="gene ID" value="Avin_23800"/>
</dbReference>
<dbReference type="GeneID" id="88185563"/>
<dbReference type="KEGG" id="avn:Avin_23800"/>
<dbReference type="eggNOG" id="COG4229">
    <property type="taxonomic scope" value="Bacteria"/>
</dbReference>
<dbReference type="HOGENOM" id="CLU_023273_0_0_6"/>
<dbReference type="OrthoDB" id="9797416at2"/>
<dbReference type="UniPathway" id="UPA00904">
    <property type="reaction ID" value="UER00876"/>
</dbReference>
<dbReference type="UniPathway" id="UPA00904">
    <property type="reaction ID" value="UER00877"/>
</dbReference>
<dbReference type="Proteomes" id="UP000002424">
    <property type="component" value="Chromosome"/>
</dbReference>
<dbReference type="GO" id="GO:0043715">
    <property type="term" value="F:2,3-diketo-5-methylthiopentyl-1-phosphate enolase activity"/>
    <property type="evidence" value="ECO:0007669"/>
    <property type="project" value="UniProtKB-UniRule"/>
</dbReference>
<dbReference type="GO" id="GO:0043716">
    <property type="term" value="F:2-hydroxy-3-keto-5-methylthiopentenyl-1-phosphate phosphatase activity"/>
    <property type="evidence" value="ECO:0007669"/>
    <property type="project" value="UniProtKB-UniRule"/>
</dbReference>
<dbReference type="GO" id="GO:0043874">
    <property type="term" value="F:acireductone synthase activity"/>
    <property type="evidence" value="ECO:0007669"/>
    <property type="project" value="UniProtKB-EC"/>
</dbReference>
<dbReference type="GO" id="GO:0000287">
    <property type="term" value="F:magnesium ion binding"/>
    <property type="evidence" value="ECO:0007669"/>
    <property type="project" value="UniProtKB-UniRule"/>
</dbReference>
<dbReference type="GO" id="GO:0019509">
    <property type="term" value="P:L-methionine salvage from methylthioadenosine"/>
    <property type="evidence" value="ECO:0007669"/>
    <property type="project" value="UniProtKB-UniRule"/>
</dbReference>
<dbReference type="CDD" id="cd01629">
    <property type="entry name" value="HAD_EP"/>
    <property type="match status" value="1"/>
</dbReference>
<dbReference type="FunFam" id="3.40.50.1000:FF:000079">
    <property type="entry name" value="Enolase-phosphatase E1"/>
    <property type="match status" value="1"/>
</dbReference>
<dbReference type="Gene3D" id="1.10.720.60">
    <property type="match status" value="1"/>
</dbReference>
<dbReference type="Gene3D" id="3.40.50.1000">
    <property type="entry name" value="HAD superfamily/HAD-like"/>
    <property type="match status" value="1"/>
</dbReference>
<dbReference type="HAMAP" id="MF_01681">
    <property type="entry name" value="Salvage_MtnC"/>
    <property type="match status" value="1"/>
</dbReference>
<dbReference type="InterPro" id="IPR023943">
    <property type="entry name" value="Enolase-ppase_E1"/>
</dbReference>
<dbReference type="InterPro" id="IPR036412">
    <property type="entry name" value="HAD-like_sf"/>
</dbReference>
<dbReference type="InterPro" id="IPR006439">
    <property type="entry name" value="HAD-SF_hydro_IA"/>
</dbReference>
<dbReference type="InterPro" id="IPR023214">
    <property type="entry name" value="HAD_sf"/>
</dbReference>
<dbReference type="NCBIfam" id="TIGR01691">
    <property type="entry name" value="enolase-ppase"/>
    <property type="match status" value="1"/>
</dbReference>
<dbReference type="PANTHER" id="PTHR20371">
    <property type="entry name" value="ENOLASE-PHOSPHATASE E1"/>
    <property type="match status" value="1"/>
</dbReference>
<dbReference type="PANTHER" id="PTHR20371:SF1">
    <property type="entry name" value="ENOLASE-PHOSPHATASE E1"/>
    <property type="match status" value="1"/>
</dbReference>
<dbReference type="Pfam" id="PF00702">
    <property type="entry name" value="Hydrolase"/>
    <property type="match status" value="1"/>
</dbReference>
<dbReference type="PRINTS" id="PR00413">
    <property type="entry name" value="HADHALOGNASE"/>
</dbReference>
<dbReference type="SFLD" id="SFLDG01129">
    <property type="entry name" value="C1.5:_HAD__Beta-PGM__Phosphata"/>
    <property type="match status" value="1"/>
</dbReference>
<dbReference type="SFLD" id="SFLDF00044">
    <property type="entry name" value="enolase-phosphatase"/>
    <property type="match status" value="1"/>
</dbReference>
<dbReference type="SUPFAM" id="SSF56784">
    <property type="entry name" value="HAD-like"/>
    <property type="match status" value="1"/>
</dbReference>